<proteinExistence type="inferred from homology"/>
<protein>
    <recommendedName>
        <fullName evidence="1">Lysine--tRNA ligase</fullName>
        <ecNumber evidence="1">6.1.1.6</ecNumber>
    </recommendedName>
    <alternativeName>
        <fullName evidence="1">Lysyl-tRNA synthetase</fullName>
        <shortName evidence="1">LysRS</shortName>
    </alternativeName>
</protein>
<sequence>MKLEAENDLMAVRLEKLHQLQEAGIEPYGGPFEVTHSTTAIRERFDELEGQEVALAGRLLAIRSHGKASFADLQDREGRLQLYIRLDNVGPGIYELFQKLDIGDIVGVRGKVFRTHRGEISVEVRQLTLLCKSLRPLPEKWHGLKDVDLRYRQRYLDLIVNPEVKQVFITRARIIRAIRSFLDNRGFLEVETPTMHPIAGGAAARPFITHHNALDIDLYLRIALELHLKRLLVGGLEKVYEMGRIFRNEGISTKHNPEFTMLELYQAYADYYVMMDLLEEMVAYVAREALGTTVVTYQGDRLDLTPPWPRLTMLEAIKKYYGVDFDQLPTAEDARRAAISLGLEIEPGMERGKIINEVFEATVEPHLIQPTFILDYPVAISPLAKRKKENPDFTYRFEAFIAGRELANAFSELNDPIDQRRRFEAQMAERAAGDEEAHMMDEDFLQALEYGMPPAGGMGIGIDRLVMVLTDSPSIRDVILFPTMRPKEE</sequence>
<evidence type="ECO:0000255" key="1">
    <source>
        <dbReference type="HAMAP-Rule" id="MF_00252"/>
    </source>
</evidence>
<accession>Q2RM49</accession>
<reference key="1">
    <citation type="journal article" date="2008" name="Environ. Microbiol.">
        <title>The complete genome sequence of Moorella thermoacetica (f. Clostridium thermoaceticum).</title>
        <authorList>
            <person name="Pierce E."/>
            <person name="Xie G."/>
            <person name="Barabote R.D."/>
            <person name="Saunders E."/>
            <person name="Han C.S."/>
            <person name="Detter J.C."/>
            <person name="Richardson P."/>
            <person name="Brettin T.S."/>
            <person name="Das A."/>
            <person name="Ljungdahl L.G."/>
            <person name="Ragsdale S.W."/>
        </authorList>
    </citation>
    <scope>NUCLEOTIDE SEQUENCE [LARGE SCALE GENOMIC DNA]</scope>
    <source>
        <strain>ATCC 39073 / JCM 9320</strain>
    </source>
</reference>
<gene>
    <name evidence="1" type="primary">lysS</name>
    <name type="ordered locus">Moth_0152</name>
</gene>
<feature type="chain" id="PRO_1000012892" description="Lysine--tRNA ligase">
    <location>
        <begin position="1"/>
        <end position="489"/>
    </location>
</feature>
<feature type="binding site" evidence="1">
    <location>
        <position position="398"/>
    </location>
    <ligand>
        <name>Mg(2+)</name>
        <dbReference type="ChEBI" id="CHEBI:18420"/>
        <label>1</label>
    </ligand>
</feature>
<feature type="binding site" evidence="1">
    <location>
        <position position="405"/>
    </location>
    <ligand>
        <name>Mg(2+)</name>
        <dbReference type="ChEBI" id="CHEBI:18420"/>
        <label>1</label>
    </ligand>
</feature>
<feature type="binding site" evidence="1">
    <location>
        <position position="405"/>
    </location>
    <ligand>
        <name>Mg(2+)</name>
        <dbReference type="ChEBI" id="CHEBI:18420"/>
        <label>2</label>
    </ligand>
</feature>
<keyword id="KW-0030">Aminoacyl-tRNA synthetase</keyword>
<keyword id="KW-0067">ATP-binding</keyword>
<keyword id="KW-0963">Cytoplasm</keyword>
<keyword id="KW-0436">Ligase</keyword>
<keyword id="KW-0460">Magnesium</keyword>
<keyword id="KW-0479">Metal-binding</keyword>
<keyword id="KW-0547">Nucleotide-binding</keyword>
<keyword id="KW-0648">Protein biosynthesis</keyword>
<organism>
    <name type="scientific">Moorella thermoacetica (strain ATCC 39073 / JCM 9320)</name>
    <dbReference type="NCBI Taxonomy" id="264732"/>
    <lineage>
        <taxon>Bacteria</taxon>
        <taxon>Bacillati</taxon>
        <taxon>Bacillota</taxon>
        <taxon>Clostridia</taxon>
        <taxon>Moorellales</taxon>
        <taxon>Moorellaceae</taxon>
        <taxon>Moorella</taxon>
    </lineage>
</organism>
<dbReference type="EC" id="6.1.1.6" evidence="1"/>
<dbReference type="EMBL" id="CP000232">
    <property type="protein sequence ID" value="ABC18490.1"/>
    <property type="molecule type" value="Genomic_DNA"/>
</dbReference>
<dbReference type="RefSeq" id="YP_429033.1">
    <property type="nucleotide sequence ID" value="NC_007644.1"/>
</dbReference>
<dbReference type="SMR" id="Q2RM49"/>
<dbReference type="STRING" id="264732.Moth_0152"/>
<dbReference type="EnsemblBacteria" id="ABC18490">
    <property type="protein sequence ID" value="ABC18490"/>
    <property type="gene ID" value="Moth_0152"/>
</dbReference>
<dbReference type="KEGG" id="mta:Moth_0152"/>
<dbReference type="PATRIC" id="fig|264732.11.peg.162"/>
<dbReference type="eggNOG" id="COG1190">
    <property type="taxonomic scope" value="Bacteria"/>
</dbReference>
<dbReference type="HOGENOM" id="CLU_008255_6_0_9"/>
<dbReference type="OrthoDB" id="9802326at2"/>
<dbReference type="GO" id="GO:0005829">
    <property type="term" value="C:cytosol"/>
    <property type="evidence" value="ECO:0007669"/>
    <property type="project" value="TreeGrafter"/>
</dbReference>
<dbReference type="GO" id="GO:0005524">
    <property type="term" value="F:ATP binding"/>
    <property type="evidence" value="ECO:0007669"/>
    <property type="project" value="UniProtKB-UniRule"/>
</dbReference>
<dbReference type="GO" id="GO:0140096">
    <property type="term" value="F:catalytic activity, acting on a protein"/>
    <property type="evidence" value="ECO:0007669"/>
    <property type="project" value="UniProtKB-ARBA"/>
</dbReference>
<dbReference type="GO" id="GO:0004824">
    <property type="term" value="F:lysine-tRNA ligase activity"/>
    <property type="evidence" value="ECO:0007669"/>
    <property type="project" value="UniProtKB-UniRule"/>
</dbReference>
<dbReference type="GO" id="GO:0000287">
    <property type="term" value="F:magnesium ion binding"/>
    <property type="evidence" value="ECO:0007669"/>
    <property type="project" value="UniProtKB-UniRule"/>
</dbReference>
<dbReference type="GO" id="GO:0016740">
    <property type="term" value="F:transferase activity"/>
    <property type="evidence" value="ECO:0007669"/>
    <property type="project" value="UniProtKB-ARBA"/>
</dbReference>
<dbReference type="GO" id="GO:0000049">
    <property type="term" value="F:tRNA binding"/>
    <property type="evidence" value="ECO:0007669"/>
    <property type="project" value="TreeGrafter"/>
</dbReference>
<dbReference type="GO" id="GO:0006430">
    <property type="term" value="P:lysyl-tRNA aminoacylation"/>
    <property type="evidence" value="ECO:0007669"/>
    <property type="project" value="UniProtKB-UniRule"/>
</dbReference>
<dbReference type="CDD" id="cd00775">
    <property type="entry name" value="LysRS_core"/>
    <property type="match status" value="1"/>
</dbReference>
<dbReference type="CDD" id="cd04322">
    <property type="entry name" value="LysRS_N"/>
    <property type="match status" value="1"/>
</dbReference>
<dbReference type="FunFam" id="2.40.50.140:FF:000024">
    <property type="entry name" value="Lysine--tRNA ligase"/>
    <property type="match status" value="1"/>
</dbReference>
<dbReference type="FunFam" id="3.30.930.10:FF:000001">
    <property type="entry name" value="Lysine--tRNA ligase"/>
    <property type="match status" value="1"/>
</dbReference>
<dbReference type="Gene3D" id="3.30.930.10">
    <property type="entry name" value="Bira Bifunctional Protein, Domain 2"/>
    <property type="match status" value="1"/>
</dbReference>
<dbReference type="Gene3D" id="2.40.50.140">
    <property type="entry name" value="Nucleic acid-binding proteins"/>
    <property type="match status" value="1"/>
</dbReference>
<dbReference type="HAMAP" id="MF_00252">
    <property type="entry name" value="Lys_tRNA_synth_class2"/>
    <property type="match status" value="1"/>
</dbReference>
<dbReference type="InterPro" id="IPR004364">
    <property type="entry name" value="Aa-tRNA-synt_II"/>
</dbReference>
<dbReference type="InterPro" id="IPR006195">
    <property type="entry name" value="aa-tRNA-synth_II"/>
</dbReference>
<dbReference type="InterPro" id="IPR045864">
    <property type="entry name" value="aa-tRNA-synth_II/BPL/LPL"/>
</dbReference>
<dbReference type="InterPro" id="IPR002313">
    <property type="entry name" value="Lys-tRNA-ligase_II"/>
</dbReference>
<dbReference type="InterPro" id="IPR034762">
    <property type="entry name" value="Lys-tRNA-ligase_II_bac/euk"/>
</dbReference>
<dbReference type="InterPro" id="IPR044136">
    <property type="entry name" value="Lys-tRNA-ligase_II_N"/>
</dbReference>
<dbReference type="InterPro" id="IPR018149">
    <property type="entry name" value="Lys-tRNA-synth_II_C"/>
</dbReference>
<dbReference type="InterPro" id="IPR012340">
    <property type="entry name" value="NA-bd_OB-fold"/>
</dbReference>
<dbReference type="InterPro" id="IPR004365">
    <property type="entry name" value="NA-bd_OB_tRNA"/>
</dbReference>
<dbReference type="NCBIfam" id="TIGR00499">
    <property type="entry name" value="lysS_bact"/>
    <property type="match status" value="1"/>
</dbReference>
<dbReference type="NCBIfam" id="NF001756">
    <property type="entry name" value="PRK00484.1"/>
    <property type="match status" value="1"/>
</dbReference>
<dbReference type="PANTHER" id="PTHR42918:SF15">
    <property type="entry name" value="LYSINE--TRNA LIGASE, CHLOROPLASTIC_MITOCHONDRIAL"/>
    <property type="match status" value="1"/>
</dbReference>
<dbReference type="PANTHER" id="PTHR42918">
    <property type="entry name" value="LYSYL-TRNA SYNTHETASE"/>
    <property type="match status" value="1"/>
</dbReference>
<dbReference type="Pfam" id="PF00152">
    <property type="entry name" value="tRNA-synt_2"/>
    <property type="match status" value="1"/>
</dbReference>
<dbReference type="Pfam" id="PF01336">
    <property type="entry name" value="tRNA_anti-codon"/>
    <property type="match status" value="1"/>
</dbReference>
<dbReference type="PIRSF" id="PIRSF039101">
    <property type="entry name" value="LysRS2"/>
    <property type="match status" value="1"/>
</dbReference>
<dbReference type="PRINTS" id="PR00982">
    <property type="entry name" value="TRNASYNTHLYS"/>
</dbReference>
<dbReference type="SUPFAM" id="SSF55681">
    <property type="entry name" value="Class II aaRS and biotin synthetases"/>
    <property type="match status" value="1"/>
</dbReference>
<dbReference type="SUPFAM" id="SSF50249">
    <property type="entry name" value="Nucleic acid-binding proteins"/>
    <property type="match status" value="1"/>
</dbReference>
<dbReference type="PROSITE" id="PS50862">
    <property type="entry name" value="AA_TRNA_LIGASE_II"/>
    <property type="match status" value="1"/>
</dbReference>
<name>SYK_MOOTA</name>
<comment type="catalytic activity">
    <reaction evidence="1">
        <text>tRNA(Lys) + L-lysine + ATP = L-lysyl-tRNA(Lys) + AMP + diphosphate</text>
        <dbReference type="Rhea" id="RHEA:20792"/>
        <dbReference type="Rhea" id="RHEA-COMP:9696"/>
        <dbReference type="Rhea" id="RHEA-COMP:9697"/>
        <dbReference type="ChEBI" id="CHEBI:30616"/>
        <dbReference type="ChEBI" id="CHEBI:32551"/>
        <dbReference type="ChEBI" id="CHEBI:33019"/>
        <dbReference type="ChEBI" id="CHEBI:78442"/>
        <dbReference type="ChEBI" id="CHEBI:78529"/>
        <dbReference type="ChEBI" id="CHEBI:456215"/>
        <dbReference type="EC" id="6.1.1.6"/>
    </reaction>
</comment>
<comment type="cofactor">
    <cofactor evidence="1">
        <name>Mg(2+)</name>
        <dbReference type="ChEBI" id="CHEBI:18420"/>
    </cofactor>
    <text evidence="1">Binds 3 Mg(2+) ions per subunit.</text>
</comment>
<comment type="subunit">
    <text evidence="1">Homodimer.</text>
</comment>
<comment type="subcellular location">
    <subcellularLocation>
        <location evidence="1">Cytoplasm</location>
    </subcellularLocation>
</comment>
<comment type="similarity">
    <text evidence="1">Belongs to the class-II aminoacyl-tRNA synthetase family.</text>
</comment>